<dbReference type="EC" id="3.1.1.4"/>
<dbReference type="EMBL" id="U60017">
    <property type="protein sequence ID" value="AAB09474.1"/>
    <property type="molecule type" value="mRNA"/>
</dbReference>
<dbReference type="PIR" id="JC5243">
    <property type="entry name" value="JC5243"/>
</dbReference>
<dbReference type="SMR" id="Q98996"/>
<dbReference type="GO" id="GO:0005576">
    <property type="term" value="C:extracellular region"/>
    <property type="evidence" value="ECO:0007669"/>
    <property type="project" value="UniProtKB-SubCell"/>
</dbReference>
<dbReference type="GO" id="GO:0005509">
    <property type="term" value="F:calcium ion binding"/>
    <property type="evidence" value="ECO:0007669"/>
    <property type="project" value="InterPro"/>
</dbReference>
<dbReference type="GO" id="GO:0047498">
    <property type="term" value="F:calcium-dependent phospholipase A2 activity"/>
    <property type="evidence" value="ECO:0007669"/>
    <property type="project" value="TreeGrafter"/>
</dbReference>
<dbReference type="GO" id="GO:0005543">
    <property type="term" value="F:phospholipid binding"/>
    <property type="evidence" value="ECO:0007669"/>
    <property type="project" value="TreeGrafter"/>
</dbReference>
<dbReference type="GO" id="GO:0090729">
    <property type="term" value="F:toxin activity"/>
    <property type="evidence" value="ECO:0007669"/>
    <property type="project" value="UniProtKB-KW"/>
</dbReference>
<dbReference type="GO" id="GO:0050482">
    <property type="term" value="P:arachidonate secretion"/>
    <property type="evidence" value="ECO:0007669"/>
    <property type="project" value="InterPro"/>
</dbReference>
<dbReference type="GO" id="GO:0016042">
    <property type="term" value="P:lipid catabolic process"/>
    <property type="evidence" value="ECO:0007669"/>
    <property type="project" value="UniProtKB-KW"/>
</dbReference>
<dbReference type="GO" id="GO:0006644">
    <property type="term" value="P:phospholipid metabolic process"/>
    <property type="evidence" value="ECO:0007669"/>
    <property type="project" value="InterPro"/>
</dbReference>
<dbReference type="GO" id="GO:0008217">
    <property type="term" value="P:regulation of blood pressure"/>
    <property type="evidence" value="ECO:0007669"/>
    <property type="project" value="UniProtKB-KW"/>
</dbReference>
<dbReference type="CDD" id="cd00125">
    <property type="entry name" value="PLA2c"/>
    <property type="match status" value="1"/>
</dbReference>
<dbReference type="FunFam" id="1.20.90.10:FF:000001">
    <property type="entry name" value="Basic phospholipase A2 homolog"/>
    <property type="match status" value="1"/>
</dbReference>
<dbReference type="Gene3D" id="1.20.90.10">
    <property type="entry name" value="Phospholipase A2 domain"/>
    <property type="match status" value="1"/>
</dbReference>
<dbReference type="InterPro" id="IPR001211">
    <property type="entry name" value="PLipase_A2"/>
</dbReference>
<dbReference type="InterPro" id="IPR033112">
    <property type="entry name" value="PLipase_A2_Asp_AS"/>
</dbReference>
<dbReference type="InterPro" id="IPR016090">
    <property type="entry name" value="PLipase_A2_dom"/>
</dbReference>
<dbReference type="InterPro" id="IPR036444">
    <property type="entry name" value="PLipase_A2_dom_sf"/>
</dbReference>
<dbReference type="InterPro" id="IPR033113">
    <property type="entry name" value="PLipase_A2_His_AS"/>
</dbReference>
<dbReference type="PANTHER" id="PTHR11716:SF101">
    <property type="entry name" value="BASIC PHOSPHOLIPASE A2 PA-11-LIKE"/>
    <property type="match status" value="1"/>
</dbReference>
<dbReference type="PANTHER" id="PTHR11716">
    <property type="entry name" value="PHOSPHOLIPASE A2 FAMILY MEMBER"/>
    <property type="match status" value="1"/>
</dbReference>
<dbReference type="Pfam" id="PF00068">
    <property type="entry name" value="Phospholip_A2_1"/>
    <property type="match status" value="1"/>
</dbReference>
<dbReference type="PRINTS" id="PR00389">
    <property type="entry name" value="PHPHLIPASEA2"/>
</dbReference>
<dbReference type="SMART" id="SM00085">
    <property type="entry name" value="PA2c"/>
    <property type="match status" value="1"/>
</dbReference>
<dbReference type="SUPFAM" id="SSF48619">
    <property type="entry name" value="Phospholipase A2, PLA2"/>
    <property type="match status" value="1"/>
</dbReference>
<dbReference type="PROSITE" id="PS00119">
    <property type="entry name" value="PA2_ASP"/>
    <property type="match status" value="1"/>
</dbReference>
<dbReference type="PROSITE" id="PS00118">
    <property type="entry name" value="PA2_HIS"/>
    <property type="match status" value="1"/>
</dbReference>
<protein>
    <recommendedName>
        <fullName>Acidic phospholipase A2 VpaPLA2</fullName>
        <shortName>svPLA2</shortName>
        <ecNumber>3.1.1.4</ecNumber>
    </recommendedName>
    <alternativeName>
        <fullName>Phosphatidylcholine 2-acylhydrolase</fullName>
    </alternativeName>
</protein>
<organism>
    <name type="scientific">Daboia palaestinae</name>
    <name type="common">Palestine viper</name>
    <name type="synonym">Vipera palaestinae</name>
    <dbReference type="NCBI Taxonomy" id="1170828"/>
    <lineage>
        <taxon>Eukaryota</taxon>
        <taxon>Metazoa</taxon>
        <taxon>Chordata</taxon>
        <taxon>Craniata</taxon>
        <taxon>Vertebrata</taxon>
        <taxon>Euteleostomi</taxon>
        <taxon>Lepidosauria</taxon>
        <taxon>Squamata</taxon>
        <taxon>Bifurcata</taxon>
        <taxon>Unidentata</taxon>
        <taxon>Episquamata</taxon>
        <taxon>Toxicofera</taxon>
        <taxon>Serpentes</taxon>
        <taxon>Colubroidea</taxon>
        <taxon>Viperidae</taxon>
        <taxon>Viperinae</taxon>
        <taxon>Daboia</taxon>
    </lineage>
</organism>
<accession>Q98996</accession>
<feature type="signal peptide" evidence="4">
    <location>
        <begin position="1"/>
        <end position="16"/>
    </location>
</feature>
<feature type="chain" id="PRO_0000022979" description="Acidic phospholipase A2 VpaPLA2">
    <location>
        <begin position="17"/>
        <end position="138"/>
    </location>
</feature>
<feature type="active site" evidence="1">
    <location>
        <position position="63"/>
    </location>
</feature>
<feature type="active site" evidence="1">
    <location>
        <position position="105"/>
    </location>
</feature>
<feature type="binding site" evidence="1">
    <location>
        <position position="43"/>
    </location>
    <ligand>
        <name>Ca(2+)</name>
        <dbReference type="ChEBI" id="CHEBI:29108"/>
    </ligand>
</feature>
<feature type="binding site" evidence="1">
    <location>
        <position position="45"/>
    </location>
    <ligand>
        <name>Ca(2+)</name>
        <dbReference type="ChEBI" id="CHEBI:29108"/>
    </ligand>
</feature>
<feature type="binding site" evidence="1">
    <location>
        <position position="47"/>
    </location>
    <ligand>
        <name>Ca(2+)</name>
        <dbReference type="ChEBI" id="CHEBI:29108"/>
    </ligand>
</feature>
<feature type="binding site" evidence="1">
    <location>
        <position position="64"/>
    </location>
    <ligand>
        <name>Ca(2+)</name>
        <dbReference type="ChEBI" id="CHEBI:29108"/>
    </ligand>
</feature>
<feature type="disulfide bond" evidence="1">
    <location>
        <begin position="42"/>
        <end position="131"/>
    </location>
</feature>
<feature type="disulfide bond" evidence="1">
    <location>
        <begin position="44"/>
        <end position="60"/>
    </location>
</feature>
<feature type="disulfide bond" evidence="1">
    <location>
        <begin position="59"/>
        <end position="111"/>
    </location>
</feature>
<feature type="disulfide bond" evidence="1">
    <location>
        <begin position="65"/>
        <end position="138"/>
    </location>
</feature>
<feature type="disulfide bond" evidence="1">
    <location>
        <begin position="66"/>
        <end position="104"/>
    </location>
</feature>
<feature type="disulfide bond" evidence="1">
    <location>
        <begin position="73"/>
        <end position="97"/>
    </location>
</feature>
<feature type="disulfide bond" evidence="1">
    <location>
        <begin position="91"/>
        <end position="102"/>
    </location>
</feature>
<keyword id="KW-0106">Calcium</keyword>
<keyword id="KW-0903">Direct protein sequencing</keyword>
<keyword id="KW-1015">Disulfide bond</keyword>
<keyword id="KW-0378">Hydrolase</keyword>
<keyword id="KW-0382">Hypotensive agent</keyword>
<keyword id="KW-0442">Lipid degradation</keyword>
<keyword id="KW-0443">Lipid metabolism</keyword>
<keyword id="KW-0479">Metal-binding</keyword>
<keyword id="KW-0964">Secreted</keyword>
<keyword id="KW-0732">Signal</keyword>
<keyword id="KW-0800">Toxin</keyword>
<comment type="function">
    <text>Snake venom phospholipase A2 (PLA2) that causes a sudden decrease of arterial blood pressure when injected into rat, but is not lethal. When co-injected with an uncharacterized basic protein (which did not show any enzymatic activity, but also causes a drop in blood pressure), this synergistical mixture is lethal. PLA2 catalyzes the calcium-dependent hydrolysis of the 2-acyl groups in 3-sn-phosphoglycerides.</text>
</comment>
<comment type="catalytic activity">
    <reaction evidence="2 3">
        <text>a 1,2-diacyl-sn-glycero-3-phosphocholine + H2O = a 1-acyl-sn-glycero-3-phosphocholine + a fatty acid + H(+)</text>
        <dbReference type="Rhea" id="RHEA:15801"/>
        <dbReference type="ChEBI" id="CHEBI:15377"/>
        <dbReference type="ChEBI" id="CHEBI:15378"/>
        <dbReference type="ChEBI" id="CHEBI:28868"/>
        <dbReference type="ChEBI" id="CHEBI:57643"/>
        <dbReference type="ChEBI" id="CHEBI:58168"/>
        <dbReference type="EC" id="3.1.1.4"/>
    </reaction>
</comment>
<comment type="cofactor">
    <cofactor evidence="1">
        <name>Ca(2+)</name>
        <dbReference type="ChEBI" id="CHEBI:29108"/>
    </cofactor>
    <text evidence="1">Binds 1 Ca(2+) ion.</text>
</comment>
<comment type="subcellular location">
    <subcellularLocation>
        <location>Secreted</location>
    </subcellularLocation>
</comment>
<comment type="tissue specificity">
    <text>Expressed by the venom gland.</text>
</comment>
<comment type="similarity">
    <text evidence="5">Belongs to the phospholipase A2 family. Group II subfamily. D49 sub-subfamily.</text>
</comment>
<name>PA2A_DABPA</name>
<proteinExistence type="evidence at protein level"/>
<evidence type="ECO:0000250" key="1"/>
<evidence type="ECO:0000255" key="2">
    <source>
        <dbReference type="PROSITE-ProRule" id="PRU10035"/>
    </source>
</evidence>
<evidence type="ECO:0000255" key="3">
    <source>
        <dbReference type="PROSITE-ProRule" id="PRU10036"/>
    </source>
</evidence>
<evidence type="ECO:0000269" key="4">
    <source>
    </source>
</evidence>
<evidence type="ECO:0000305" key="5"/>
<reference key="1">
    <citation type="journal article" date="1996" name="Biochem. Biophys. Res. Commun.">
        <title>Protein and cDNA structures of an acidic phospholipase A2, the enzymatic part of an unusual, two-component toxin from Vipera palaestinae.</title>
        <authorList>
            <person name="Krizaj I."/>
            <person name="Bdolah A."/>
            <person name="Gubensek F."/>
            <person name="Bencina P."/>
            <person name="Pungercar J."/>
        </authorList>
    </citation>
    <scope>NUCLEOTIDE SEQUENCE [MRNA]</scope>
    <scope>PROTEIN SEQUENCE OF 17-138</scope>
    <source>
        <tissue>Venom gland</tissue>
    </source>
</reference>
<sequence length="138" mass="15433">MRTLWIVAVCLMGVEGHLTQFGDMINKKTGTFGLLSYVYYGCYCGLGGKGKPQDATDRCCFVHDCCYGTVNGCDPKLSTYSYSFQNGDIVCGDDDPCLRAVCECDRVAAICFGENMNTYDKKYMLYSFFDCMEESEKC</sequence>